<feature type="chain" id="PRO_0000184300" description="Ribosomal RNA small subunit methyltransferase G">
    <location>
        <begin position="1"/>
        <end position="206"/>
    </location>
</feature>
<feature type="binding site" evidence="1">
    <location>
        <position position="73"/>
    </location>
    <ligand>
        <name>S-adenosyl-L-methionine</name>
        <dbReference type="ChEBI" id="CHEBI:59789"/>
    </ligand>
</feature>
<feature type="binding site" evidence="1">
    <location>
        <position position="78"/>
    </location>
    <ligand>
        <name>S-adenosyl-L-methionine</name>
        <dbReference type="ChEBI" id="CHEBI:59789"/>
    </ligand>
</feature>
<feature type="binding site" evidence="1">
    <location>
        <begin position="124"/>
        <end position="125"/>
    </location>
    <ligand>
        <name>S-adenosyl-L-methionine</name>
        <dbReference type="ChEBI" id="CHEBI:59789"/>
    </ligand>
</feature>
<feature type="binding site" evidence="1">
    <location>
        <position position="139"/>
    </location>
    <ligand>
        <name>S-adenosyl-L-methionine</name>
        <dbReference type="ChEBI" id="CHEBI:59789"/>
    </ligand>
</feature>
<keyword id="KW-0963">Cytoplasm</keyword>
<keyword id="KW-0489">Methyltransferase</keyword>
<keyword id="KW-1185">Reference proteome</keyword>
<keyword id="KW-0698">rRNA processing</keyword>
<keyword id="KW-0949">S-adenosyl-L-methionine</keyword>
<keyword id="KW-0808">Transferase</keyword>
<name>RSMG_PHOLL</name>
<evidence type="ECO:0000255" key="1">
    <source>
        <dbReference type="HAMAP-Rule" id="MF_00074"/>
    </source>
</evidence>
<organism>
    <name type="scientific">Photorhabdus laumondii subsp. laumondii (strain DSM 15139 / CIP 105565 / TT01)</name>
    <name type="common">Photorhabdus luminescens subsp. laumondii</name>
    <dbReference type="NCBI Taxonomy" id="243265"/>
    <lineage>
        <taxon>Bacteria</taxon>
        <taxon>Pseudomonadati</taxon>
        <taxon>Pseudomonadota</taxon>
        <taxon>Gammaproteobacteria</taxon>
        <taxon>Enterobacterales</taxon>
        <taxon>Morganellaceae</taxon>
        <taxon>Photorhabdus</taxon>
    </lineage>
</organism>
<protein>
    <recommendedName>
        <fullName evidence="1">Ribosomal RNA small subunit methyltransferase G</fullName>
        <ecNumber evidence="1">2.1.1.170</ecNumber>
    </recommendedName>
    <alternativeName>
        <fullName evidence="1">16S rRNA 7-methylguanosine methyltransferase</fullName>
        <shortName evidence="1">16S rRNA m7G methyltransferase</shortName>
    </alternativeName>
</protein>
<sequence>MLNKLELLLTKAGIELSLQQKQQLVAYVDMLNKWNKAYNLTSVREPEQMLVRHIMDSIVVSPYLQGHRFIDVGTGPGLPGIPLAIVRPDSHFTLLDSLGKRVRFLRQVQHELDLVNIEPVQSRVEAYSSEPPFDGVISRAFASLKDMVSWCSHLPEPIHGRFYALKGVLPEEELTILPFGISIDSVIKLNVPELEGQRHLVILKSN</sequence>
<proteinExistence type="inferred from homology"/>
<reference key="1">
    <citation type="journal article" date="2003" name="Nat. Biotechnol.">
        <title>The genome sequence of the entomopathogenic bacterium Photorhabdus luminescens.</title>
        <authorList>
            <person name="Duchaud E."/>
            <person name="Rusniok C."/>
            <person name="Frangeul L."/>
            <person name="Buchrieser C."/>
            <person name="Givaudan A."/>
            <person name="Taourit S."/>
            <person name="Bocs S."/>
            <person name="Boursaux-Eude C."/>
            <person name="Chandler M."/>
            <person name="Charles J.-F."/>
            <person name="Dassa E."/>
            <person name="Derose R."/>
            <person name="Derzelle S."/>
            <person name="Freyssinet G."/>
            <person name="Gaudriault S."/>
            <person name="Medigue C."/>
            <person name="Lanois A."/>
            <person name="Powell K."/>
            <person name="Siguier P."/>
            <person name="Vincent R."/>
            <person name="Wingate V."/>
            <person name="Zouine M."/>
            <person name="Glaser P."/>
            <person name="Boemare N."/>
            <person name="Danchin A."/>
            <person name="Kunst F."/>
        </authorList>
    </citation>
    <scope>NUCLEOTIDE SEQUENCE [LARGE SCALE GENOMIC DNA]</scope>
    <source>
        <strain>DSM 15139 / CIP 105565 / TT01</strain>
    </source>
</reference>
<dbReference type="EC" id="2.1.1.170" evidence="1"/>
<dbReference type="EMBL" id="BX571859">
    <property type="protein sequence ID" value="CAE12343.1"/>
    <property type="molecule type" value="Genomic_DNA"/>
</dbReference>
<dbReference type="RefSeq" id="WP_011144460.1">
    <property type="nucleotide sequence ID" value="NC_005126.1"/>
</dbReference>
<dbReference type="SMR" id="Q7NA87"/>
<dbReference type="STRING" id="243265.plu0048"/>
<dbReference type="GeneID" id="48846348"/>
<dbReference type="KEGG" id="plu:plu0048"/>
<dbReference type="eggNOG" id="COG0357">
    <property type="taxonomic scope" value="Bacteria"/>
</dbReference>
<dbReference type="HOGENOM" id="CLU_065341_2_2_6"/>
<dbReference type="OrthoDB" id="9808773at2"/>
<dbReference type="Proteomes" id="UP000002514">
    <property type="component" value="Chromosome"/>
</dbReference>
<dbReference type="GO" id="GO:0005829">
    <property type="term" value="C:cytosol"/>
    <property type="evidence" value="ECO:0007669"/>
    <property type="project" value="TreeGrafter"/>
</dbReference>
<dbReference type="GO" id="GO:0070043">
    <property type="term" value="F:rRNA (guanine-N7-)-methyltransferase activity"/>
    <property type="evidence" value="ECO:0007669"/>
    <property type="project" value="UniProtKB-UniRule"/>
</dbReference>
<dbReference type="CDD" id="cd02440">
    <property type="entry name" value="AdoMet_MTases"/>
    <property type="match status" value="1"/>
</dbReference>
<dbReference type="FunFam" id="3.40.50.150:FF:000032">
    <property type="entry name" value="Ribosomal RNA small subunit methyltransferase G"/>
    <property type="match status" value="1"/>
</dbReference>
<dbReference type="Gene3D" id="3.40.50.150">
    <property type="entry name" value="Vaccinia Virus protein VP39"/>
    <property type="match status" value="1"/>
</dbReference>
<dbReference type="HAMAP" id="MF_00074">
    <property type="entry name" value="16SrRNA_methyltr_G"/>
    <property type="match status" value="1"/>
</dbReference>
<dbReference type="InterPro" id="IPR003682">
    <property type="entry name" value="rRNA_ssu_MeTfrase_G"/>
</dbReference>
<dbReference type="InterPro" id="IPR029063">
    <property type="entry name" value="SAM-dependent_MTases_sf"/>
</dbReference>
<dbReference type="NCBIfam" id="TIGR00138">
    <property type="entry name" value="rsmG_gidB"/>
    <property type="match status" value="1"/>
</dbReference>
<dbReference type="PANTHER" id="PTHR31760">
    <property type="entry name" value="S-ADENOSYL-L-METHIONINE-DEPENDENT METHYLTRANSFERASES SUPERFAMILY PROTEIN"/>
    <property type="match status" value="1"/>
</dbReference>
<dbReference type="PANTHER" id="PTHR31760:SF0">
    <property type="entry name" value="S-ADENOSYL-L-METHIONINE-DEPENDENT METHYLTRANSFERASES SUPERFAMILY PROTEIN"/>
    <property type="match status" value="1"/>
</dbReference>
<dbReference type="Pfam" id="PF02527">
    <property type="entry name" value="GidB"/>
    <property type="match status" value="1"/>
</dbReference>
<dbReference type="PIRSF" id="PIRSF003078">
    <property type="entry name" value="GidB"/>
    <property type="match status" value="1"/>
</dbReference>
<dbReference type="SUPFAM" id="SSF53335">
    <property type="entry name" value="S-adenosyl-L-methionine-dependent methyltransferases"/>
    <property type="match status" value="1"/>
</dbReference>
<gene>
    <name evidence="1" type="primary">rsmG</name>
    <name type="ordered locus">plu0048</name>
</gene>
<comment type="function">
    <text evidence="1">Specifically methylates the N7 position of guanine in position 527 of 16S rRNA.</text>
</comment>
<comment type="catalytic activity">
    <reaction evidence="1">
        <text>guanosine(527) in 16S rRNA + S-adenosyl-L-methionine = N(7)-methylguanosine(527) in 16S rRNA + S-adenosyl-L-homocysteine</text>
        <dbReference type="Rhea" id="RHEA:42732"/>
        <dbReference type="Rhea" id="RHEA-COMP:10209"/>
        <dbReference type="Rhea" id="RHEA-COMP:10210"/>
        <dbReference type="ChEBI" id="CHEBI:57856"/>
        <dbReference type="ChEBI" id="CHEBI:59789"/>
        <dbReference type="ChEBI" id="CHEBI:74269"/>
        <dbReference type="ChEBI" id="CHEBI:74480"/>
        <dbReference type="EC" id="2.1.1.170"/>
    </reaction>
</comment>
<comment type="subcellular location">
    <subcellularLocation>
        <location evidence="1">Cytoplasm</location>
    </subcellularLocation>
</comment>
<comment type="similarity">
    <text evidence="1">Belongs to the methyltransferase superfamily. RNA methyltransferase RsmG family.</text>
</comment>
<accession>Q7NA87</accession>